<organism>
    <name type="scientific">Shewanella sediminis (strain HAW-EB3)</name>
    <dbReference type="NCBI Taxonomy" id="425104"/>
    <lineage>
        <taxon>Bacteria</taxon>
        <taxon>Pseudomonadati</taxon>
        <taxon>Pseudomonadota</taxon>
        <taxon>Gammaproteobacteria</taxon>
        <taxon>Alteromonadales</taxon>
        <taxon>Shewanellaceae</taxon>
        <taxon>Shewanella</taxon>
    </lineage>
</organism>
<sequence length="343" mass="38076">MLTNPSQLILRNSDLFAGQNVLVLNYEGDLLPKQLLESAKKVTALSLDYHHHLIMSPYAEQNLALHFGHMLPDEEQFDTVIIYYPKAKALASYLLNLAGVHLKPNGQLLVVGENKGGIRSIVKQVPDYFDSPFKQDSARHCLLYVSQLVEKAPQINLSDWVRNYQLETPQGEITICNLVGVFSEKRLDEGTKLLLSHLPKMSGRVLDFGCGAGVITAALLKAQPELKVECVDINAMAIESCKLTLAANNFTADTYPSDGLTQTKGLFNGIISNPPFHDGLRSTTDIAKNFVKDSVQKLKKGGVWHIVANRHLPYSDSISTHFKQVNVSAENNRYKVYSNKINS</sequence>
<reference key="1">
    <citation type="submission" date="2007-08" db="EMBL/GenBank/DDBJ databases">
        <title>Complete sequence of Shewanella sediminis HAW-EB3.</title>
        <authorList>
            <consortium name="US DOE Joint Genome Institute"/>
            <person name="Copeland A."/>
            <person name="Lucas S."/>
            <person name="Lapidus A."/>
            <person name="Barry K."/>
            <person name="Glavina del Rio T."/>
            <person name="Dalin E."/>
            <person name="Tice H."/>
            <person name="Pitluck S."/>
            <person name="Chertkov O."/>
            <person name="Brettin T."/>
            <person name="Bruce D."/>
            <person name="Detter J.C."/>
            <person name="Han C."/>
            <person name="Schmutz J."/>
            <person name="Larimer F."/>
            <person name="Land M."/>
            <person name="Hauser L."/>
            <person name="Kyrpides N."/>
            <person name="Kim E."/>
            <person name="Zhao J.-S."/>
            <person name="Richardson P."/>
        </authorList>
    </citation>
    <scope>NUCLEOTIDE SEQUENCE [LARGE SCALE GENOMIC DNA]</scope>
    <source>
        <strain>HAW-EB3</strain>
    </source>
</reference>
<evidence type="ECO:0000255" key="1">
    <source>
        <dbReference type="HAMAP-Rule" id="MF_01862"/>
    </source>
</evidence>
<keyword id="KW-0963">Cytoplasm</keyword>
<keyword id="KW-0489">Methyltransferase</keyword>
<keyword id="KW-1185">Reference proteome</keyword>
<keyword id="KW-0698">rRNA processing</keyword>
<keyword id="KW-0949">S-adenosyl-L-methionine</keyword>
<keyword id="KW-0808">Transferase</keyword>
<proteinExistence type="inferred from homology"/>
<dbReference type="EC" id="2.1.1.172" evidence="1"/>
<dbReference type="EMBL" id="CP000821">
    <property type="protein sequence ID" value="ABV38582.1"/>
    <property type="molecule type" value="Genomic_DNA"/>
</dbReference>
<dbReference type="RefSeq" id="WP_012144312.1">
    <property type="nucleotide sequence ID" value="NC_009831.1"/>
</dbReference>
<dbReference type="SMR" id="A8G0F9"/>
<dbReference type="STRING" id="425104.Ssed_3978"/>
<dbReference type="KEGG" id="sse:Ssed_3978"/>
<dbReference type="eggNOG" id="COG2813">
    <property type="taxonomic scope" value="Bacteria"/>
</dbReference>
<dbReference type="HOGENOM" id="CLU_049581_0_1_6"/>
<dbReference type="OrthoDB" id="9816072at2"/>
<dbReference type="Proteomes" id="UP000002015">
    <property type="component" value="Chromosome"/>
</dbReference>
<dbReference type="GO" id="GO:0005737">
    <property type="term" value="C:cytoplasm"/>
    <property type="evidence" value="ECO:0007669"/>
    <property type="project" value="UniProtKB-SubCell"/>
</dbReference>
<dbReference type="GO" id="GO:0052914">
    <property type="term" value="F:16S rRNA (guanine(1207)-N(2))-methyltransferase activity"/>
    <property type="evidence" value="ECO:0007669"/>
    <property type="project" value="UniProtKB-EC"/>
</dbReference>
<dbReference type="CDD" id="cd02440">
    <property type="entry name" value="AdoMet_MTases"/>
    <property type="match status" value="1"/>
</dbReference>
<dbReference type="Gene3D" id="3.40.50.150">
    <property type="entry name" value="Vaccinia Virus protein VP39"/>
    <property type="match status" value="2"/>
</dbReference>
<dbReference type="HAMAP" id="MF_01862">
    <property type="entry name" value="16SrRNA_methyltr_C"/>
    <property type="match status" value="1"/>
</dbReference>
<dbReference type="InterPro" id="IPR013675">
    <property type="entry name" value="Mtase_sm_N"/>
</dbReference>
<dbReference type="InterPro" id="IPR023543">
    <property type="entry name" value="rRNA_ssu_MeTfrase_C"/>
</dbReference>
<dbReference type="InterPro" id="IPR046977">
    <property type="entry name" value="RsmC/RlmG"/>
</dbReference>
<dbReference type="InterPro" id="IPR029063">
    <property type="entry name" value="SAM-dependent_MTases_sf"/>
</dbReference>
<dbReference type="InterPro" id="IPR007848">
    <property type="entry name" value="Small_mtfrase_dom"/>
</dbReference>
<dbReference type="PANTHER" id="PTHR47816">
    <property type="entry name" value="RIBOSOMAL RNA SMALL SUBUNIT METHYLTRANSFERASE C"/>
    <property type="match status" value="1"/>
</dbReference>
<dbReference type="PANTHER" id="PTHR47816:SF4">
    <property type="entry name" value="RIBOSOMAL RNA SMALL SUBUNIT METHYLTRANSFERASE C"/>
    <property type="match status" value="1"/>
</dbReference>
<dbReference type="Pfam" id="PF05175">
    <property type="entry name" value="MTS"/>
    <property type="match status" value="1"/>
</dbReference>
<dbReference type="Pfam" id="PF08468">
    <property type="entry name" value="MTS_N"/>
    <property type="match status" value="1"/>
</dbReference>
<dbReference type="SUPFAM" id="SSF53335">
    <property type="entry name" value="S-adenosyl-L-methionine-dependent methyltransferases"/>
    <property type="match status" value="1"/>
</dbReference>
<gene>
    <name evidence="1" type="primary">rsmC</name>
    <name type="ordered locus">Ssed_3978</name>
</gene>
<accession>A8G0F9</accession>
<protein>
    <recommendedName>
        <fullName evidence="1">Ribosomal RNA small subunit methyltransferase C</fullName>
        <ecNumber evidence="1">2.1.1.172</ecNumber>
    </recommendedName>
    <alternativeName>
        <fullName evidence="1">16S rRNA m2G1207 methyltransferase</fullName>
    </alternativeName>
    <alternativeName>
        <fullName evidence="1">rRNA (guanine-N(2)-)-methyltransferase RsmC</fullName>
    </alternativeName>
</protein>
<feature type="chain" id="PRO_0000369778" description="Ribosomal RNA small subunit methyltransferase C">
    <location>
        <begin position="1"/>
        <end position="343"/>
    </location>
</feature>
<comment type="function">
    <text evidence="1">Specifically methylates the guanine in position 1207 of 16S rRNA in the 30S particle.</text>
</comment>
<comment type="catalytic activity">
    <reaction evidence="1">
        <text>guanosine(1207) in 16S rRNA + S-adenosyl-L-methionine = N(2)-methylguanosine(1207) in 16S rRNA + S-adenosyl-L-homocysteine + H(+)</text>
        <dbReference type="Rhea" id="RHEA:42736"/>
        <dbReference type="Rhea" id="RHEA-COMP:10213"/>
        <dbReference type="Rhea" id="RHEA-COMP:10214"/>
        <dbReference type="ChEBI" id="CHEBI:15378"/>
        <dbReference type="ChEBI" id="CHEBI:57856"/>
        <dbReference type="ChEBI" id="CHEBI:59789"/>
        <dbReference type="ChEBI" id="CHEBI:74269"/>
        <dbReference type="ChEBI" id="CHEBI:74481"/>
        <dbReference type="EC" id="2.1.1.172"/>
    </reaction>
</comment>
<comment type="subunit">
    <text evidence="1">Monomer.</text>
</comment>
<comment type="subcellular location">
    <subcellularLocation>
        <location evidence="1">Cytoplasm</location>
    </subcellularLocation>
</comment>
<comment type="similarity">
    <text evidence="1">Belongs to the methyltransferase superfamily. RsmC family.</text>
</comment>
<name>RSMC_SHESH</name>